<organism>
    <name type="scientific">Pseudomonas aeruginosa (strain ATCC 15692 / DSM 22644 / CIP 104116 / JCM 14847 / LMG 12228 / 1C / PRS 101 / PAO1)</name>
    <dbReference type="NCBI Taxonomy" id="208964"/>
    <lineage>
        <taxon>Bacteria</taxon>
        <taxon>Pseudomonadati</taxon>
        <taxon>Pseudomonadota</taxon>
        <taxon>Gammaproteobacteria</taxon>
        <taxon>Pseudomonadales</taxon>
        <taxon>Pseudomonadaceae</taxon>
        <taxon>Pseudomonas</taxon>
    </lineage>
</organism>
<sequence>MTEVDLNSDMGEGFGPWTIGDGVDAAIMPLISSANIATGFHAGDPSSMRRTVEMAAEHGVAIGAHPGFRDLVGFGRRHIAAPAIELVNDMLYQLGALREFARLQGLSLQHVKPHGALYMHLARDEVAARLFVETLQRLEPELLLYCMPGSATWRIGRELGQPLVREFYADRDYDRSGSIVFTRRVAALDPQQVADKVLRACREGKVRTVEGEDLDIAFDSVCIHSDTPGALELVASTRARLEGAGIRIKAPR</sequence>
<proteinExistence type="inferred from homology"/>
<name>PXPA1_PSEAE</name>
<feature type="chain" id="PRO_0000185025" description="5-oxoprolinase subunit A 1">
    <location>
        <begin position="1"/>
        <end position="252"/>
    </location>
</feature>
<reference key="1">
    <citation type="journal article" date="2000" name="Nature">
        <title>Complete genome sequence of Pseudomonas aeruginosa PAO1, an opportunistic pathogen.</title>
        <authorList>
            <person name="Stover C.K."/>
            <person name="Pham X.-Q.T."/>
            <person name="Erwin A.L."/>
            <person name="Mizoguchi S.D."/>
            <person name="Warrener P."/>
            <person name="Hickey M.J."/>
            <person name="Brinkman F.S.L."/>
            <person name="Hufnagle W.O."/>
            <person name="Kowalik D.J."/>
            <person name="Lagrou M."/>
            <person name="Garber R.L."/>
            <person name="Goltry L."/>
            <person name="Tolentino E."/>
            <person name="Westbrock-Wadman S."/>
            <person name="Yuan Y."/>
            <person name="Brody L.L."/>
            <person name="Coulter S.N."/>
            <person name="Folger K.R."/>
            <person name="Kas A."/>
            <person name="Larbig K."/>
            <person name="Lim R.M."/>
            <person name="Smith K.A."/>
            <person name="Spencer D.H."/>
            <person name="Wong G.K.-S."/>
            <person name="Wu Z."/>
            <person name="Paulsen I.T."/>
            <person name="Reizer J."/>
            <person name="Saier M.H. Jr."/>
            <person name="Hancock R.E.W."/>
            <person name="Lory S."/>
            <person name="Olson M.V."/>
        </authorList>
    </citation>
    <scope>NUCLEOTIDE SEQUENCE [LARGE SCALE GENOMIC DNA]</scope>
    <source>
        <strain>ATCC 15692 / DSM 22644 / CIP 104116 / JCM 14847 / LMG 12228 / 1C / PRS 101 / PAO1</strain>
    </source>
</reference>
<protein>
    <recommendedName>
        <fullName evidence="1">5-oxoprolinase subunit A 1</fullName>
        <shortName evidence="1">5-OPase subunit A 1</shortName>
        <ecNumber evidence="1">3.5.2.9</ecNumber>
    </recommendedName>
    <alternativeName>
        <fullName evidence="1">5-oxoprolinase (ATP-hydrolyzing) subunit A 1</fullName>
    </alternativeName>
</protein>
<comment type="function">
    <text evidence="1">Catalyzes the cleavage of 5-oxoproline to form L-glutamate coupled to the hydrolysis of ATP to ADP and inorganic phosphate.</text>
</comment>
<comment type="catalytic activity">
    <reaction evidence="1">
        <text>5-oxo-L-proline + ATP + 2 H2O = L-glutamate + ADP + phosphate + H(+)</text>
        <dbReference type="Rhea" id="RHEA:10348"/>
        <dbReference type="ChEBI" id="CHEBI:15377"/>
        <dbReference type="ChEBI" id="CHEBI:15378"/>
        <dbReference type="ChEBI" id="CHEBI:29985"/>
        <dbReference type="ChEBI" id="CHEBI:30616"/>
        <dbReference type="ChEBI" id="CHEBI:43474"/>
        <dbReference type="ChEBI" id="CHEBI:58402"/>
        <dbReference type="ChEBI" id="CHEBI:456216"/>
        <dbReference type="EC" id="3.5.2.9"/>
    </reaction>
</comment>
<comment type="subunit">
    <text evidence="1">Forms a complex composed of PxpA, PxpB and PxpC.</text>
</comment>
<comment type="similarity">
    <text evidence="1">Belongs to the LamB/PxpA family.</text>
</comment>
<accession>Q9I626</accession>
<keyword id="KW-0067">ATP-binding</keyword>
<keyword id="KW-0378">Hydrolase</keyword>
<keyword id="KW-0547">Nucleotide-binding</keyword>
<keyword id="KW-1185">Reference proteome</keyword>
<dbReference type="EC" id="3.5.2.9" evidence="1"/>
<dbReference type="EMBL" id="AE004091">
    <property type="protein sequence ID" value="AAG03881.1"/>
    <property type="molecule type" value="Genomic_DNA"/>
</dbReference>
<dbReference type="PIR" id="G83584">
    <property type="entry name" value="G83584"/>
</dbReference>
<dbReference type="RefSeq" id="NP_249183.1">
    <property type="nucleotide sequence ID" value="NC_002516.2"/>
</dbReference>
<dbReference type="RefSeq" id="WP_003103315.1">
    <property type="nucleotide sequence ID" value="NZ_QZGE01000010.1"/>
</dbReference>
<dbReference type="SMR" id="Q9I626"/>
<dbReference type="STRING" id="208964.PA0492"/>
<dbReference type="PaxDb" id="208964-PA0492"/>
<dbReference type="GeneID" id="879645"/>
<dbReference type="KEGG" id="pae:PA0492"/>
<dbReference type="PATRIC" id="fig|208964.12.peg.519"/>
<dbReference type="PseudoCAP" id="PA0492"/>
<dbReference type="HOGENOM" id="CLU_069535_0_0_6"/>
<dbReference type="InParanoid" id="Q9I626"/>
<dbReference type="OrthoDB" id="9773478at2"/>
<dbReference type="PhylomeDB" id="Q9I626"/>
<dbReference type="BioCyc" id="PAER208964:G1FZ6-497-MONOMER"/>
<dbReference type="Proteomes" id="UP000002438">
    <property type="component" value="Chromosome"/>
</dbReference>
<dbReference type="GO" id="GO:0017168">
    <property type="term" value="F:5-oxoprolinase (ATP-hydrolyzing) activity"/>
    <property type="evidence" value="ECO:0007669"/>
    <property type="project" value="UniProtKB-UniRule"/>
</dbReference>
<dbReference type="GO" id="GO:0005524">
    <property type="term" value="F:ATP binding"/>
    <property type="evidence" value="ECO:0007669"/>
    <property type="project" value="UniProtKB-UniRule"/>
</dbReference>
<dbReference type="GO" id="GO:0005975">
    <property type="term" value="P:carbohydrate metabolic process"/>
    <property type="evidence" value="ECO:0007669"/>
    <property type="project" value="InterPro"/>
</dbReference>
<dbReference type="CDD" id="cd11664">
    <property type="entry name" value="LamB_YcsF_like_2"/>
    <property type="match status" value="1"/>
</dbReference>
<dbReference type="Gene3D" id="3.20.20.370">
    <property type="entry name" value="Glycoside hydrolase/deacetylase"/>
    <property type="match status" value="1"/>
</dbReference>
<dbReference type="HAMAP" id="MF_00691">
    <property type="entry name" value="PxpA"/>
    <property type="match status" value="1"/>
</dbReference>
<dbReference type="InterPro" id="IPR011330">
    <property type="entry name" value="Glyco_hydro/deAcase_b/a-brl"/>
</dbReference>
<dbReference type="InterPro" id="IPR005501">
    <property type="entry name" value="LamB/YcsF/PxpA-like"/>
</dbReference>
<dbReference type="NCBIfam" id="NF003814">
    <property type="entry name" value="PRK05406.1-3"/>
    <property type="match status" value="1"/>
</dbReference>
<dbReference type="NCBIfam" id="NF003816">
    <property type="entry name" value="PRK05406.1-5"/>
    <property type="match status" value="1"/>
</dbReference>
<dbReference type="PANTHER" id="PTHR30292:SF0">
    <property type="entry name" value="5-OXOPROLINASE SUBUNIT A"/>
    <property type="match status" value="1"/>
</dbReference>
<dbReference type="PANTHER" id="PTHR30292">
    <property type="entry name" value="UNCHARACTERIZED PROTEIN YBGL-RELATED"/>
    <property type="match status" value="1"/>
</dbReference>
<dbReference type="Pfam" id="PF03746">
    <property type="entry name" value="LamB_YcsF"/>
    <property type="match status" value="1"/>
</dbReference>
<dbReference type="SUPFAM" id="SSF88713">
    <property type="entry name" value="Glycoside hydrolase/deacetylase"/>
    <property type="match status" value="1"/>
</dbReference>
<gene>
    <name evidence="1" type="primary">pxpA1</name>
    <name type="ordered locus">PA0492</name>
</gene>
<evidence type="ECO:0000255" key="1">
    <source>
        <dbReference type="HAMAP-Rule" id="MF_00691"/>
    </source>
</evidence>